<sequence length="146" mass="17568">MKSYYFESNEPVSVQQLNNINVLYYPMPMPDYQEKLDQICQERGYKNRDEVKLNENTENLDAKLKIFFEEHLHDDEEIRFILEGSGFFDVRDANDQWIRIRVEKGDLIIVPANMYHRFTLTETKQIHACRLFTDAPKWVPINRHQQ</sequence>
<dbReference type="EC" id="1.13.11.54" evidence="1"/>
<dbReference type="EC" id="1.13.11.53" evidence="1"/>
<dbReference type="EMBL" id="ADBJ01000035">
    <property type="protein sequence ID" value="EFA79474.1"/>
    <property type="molecule type" value="Genomic_DNA"/>
</dbReference>
<dbReference type="SMR" id="D3BH90"/>
<dbReference type="FunCoup" id="D3BH90">
    <property type="interactions" value="301"/>
</dbReference>
<dbReference type="STRING" id="670386.D3BH90"/>
<dbReference type="InParanoid" id="D3BH90"/>
<dbReference type="OMA" id="WYMDESQ"/>
<dbReference type="UniPathway" id="UPA00904">
    <property type="reaction ID" value="UER00878"/>
</dbReference>
<dbReference type="Proteomes" id="UP000001396">
    <property type="component" value="Unassembled WGS sequence"/>
</dbReference>
<dbReference type="GO" id="GO:0005737">
    <property type="term" value="C:cytoplasm"/>
    <property type="evidence" value="ECO:0007669"/>
    <property type="project" value="UniProtKB-SubCell"/>
</dbReference>
<dbReference type="GO" id="GO:0005634">
    <property type="term" value="C:nucleus"/>
    <property type="evidence" value="ECO:0007669"/>
    <property type="project" value="UniProtKB-SubCell"/>
</dbReference>
<dbReference type="GO" id="GO:0010308">
    <property type="term" value="F:acireductone dioxygenase (Ni2+-requiring) activity"/>
    <property type="evidence" value="ECO:0007669"/>
    <property type="project" value="UniProtKB-UniRule"/>
</dbReference>
<dbReference type="GO" id="GO:0010309">
    <property type="term" value="F:acireductone dioxygenase [iron(II)-requiring] activity"/>
    <property type="evidence" value="ECO:0007669"/>
    <property type="project" value="UniProtKB-UniRule"/>
</dbReference>
<dbReference type="GO" id="GO:0005506">
    <property type="term" value="F:iron ion binding"/>
    <property type="evidence" value="ECO:0007669"/>
    <property type="project" value="UniProtKB-UniRule"/>
</dbReference>
<dbReference type="GO" id="GO:0016151">
    <property type="term" value="F:nickel cation binding"/>
    <property type="evidence" value="ECO:0007669"/>
    <property type="project" value="UniProtKB-UniRule"/>
</dbReference>
<dbReference type="GO" id="GO:0019509">
    <property type="term" value="P:L-methionine salvage from methylthioadenosine"/>
    <property type="evidence" value="ECO:0007669"/>
    <property type="project" value="UniProtKB-UniRule"/>
</dbReference>
<dbReference type="CDD" id="cd02232">
    <property type="entry name" value="cupin_ARD"/>
    <property type="match status" value="1"/>
</dbReference>
<dbReference type="FunFam" id="2.60.120.10:FF:000099">
    <property type="entry name" value="1,2-dihydroxy-3-keto-5-methylthiopentene dioxygenase"/>
    <property type="match status" value="1"/>
</dbReference>
<dbReference type="Gene3D" id="2.60.120.10">
    <property type="entry name" value="Jelly Rolls"/>
    <property type="match status" value="1"/>
</dbReference>
<dbReference type="HAMAP" id="MF_03154">
    <property type="entry name" value="Salvage_MtnD_euk"/>
    <property type="match status" value="1"/>
</dbReference>
<dbReference type="InterPro" id="IPR004313">
    <property type="entry name" value="ARD"/>
</dbReference>
<dbReference type="InterPro" id="IPR027496">
    <property type="entry name" value="ARD_euk"/>
</dbReference>
<dbReference type="InterPro" id="IPR014710">
    <property type="entry name" value="RmlC-like_jellyroll"/>
</dbReference>
<dbReference type="InterPro" id="IPR011051">
    <property type="entry name" value="RmlC_Cupin_sf"/>
</dbReference>
<dbReference type="PANTHER" id="PTHR23418">
    <property type="entry name" value="ACIREDUCTONE DIOXYGENASE"/>
    <property type="match status" value="1"/>
</dbReference>
<dbReference type="PANTHER" id="PTHR23418:SF0">
    <property type="entry name" value="ACIREDUCTONE DIOXYGENASE"/>
    <property type="match status" value="1"/>
</dbReference>
<dbReference type="Pfam" id="PF03079">
    <property type="entry name" value="ARD"/>
    <property type="match status" value="1"/>
</dbReference>
<dbReference type="SUPFAM" id="SSF51182">
    <property type="entry name" value="RmlC-like cupins"/>
    <property type="match status" value="1"/>
</dbReference>
<feature type="chain" id="PRO_0000414341" description="Acireductone dioxygenase">
    <location>
        <begin position="1"/>
        <end position="146"/>
    </location>
</feature>
<feature type="binding site" evidence="1">
    <location>
        <position position="71"/>
    </location>
    <ligand>
        <name>Fe(2+)</name>
        <dbReference type="ChEBI" id="CHEBI:29033"/>
        <note>for iron-dependent acireductone dioxygenase activity</note>
    </ligand>
</feature>
<feature type="binding site" evidence="1">
    <location>
        <position position="71"/>
    </location>
    <ligand>
        <name>Ni(2+)</name>
        <dbReference type="ChEBI" id="CHEBI:49786"/>
        <note>for nickel-dependent acireductone dioxygenase activity</note>
    </ligand>
</feature>
<feature type="binding site" evidence="1">
    <location>
        <position position="73"/>
    </location>
    <ligand>
        <name>Fe(2+)</name>
        <dbReference type="ChEBI" id="CHEBI:29033"/>
        <note>for iron-dependent acireductone dioxygenase activity</note>
    </ligand>
</feature>
<feature type="binding site" evidence="1">
    <location>
        <position position="73"/>
    </location>
    <ligand>
        <name>Ni(2+)</name>
        <dbReference type="ChEBI" id="CHEBI:49786"/>
        <note>for nickel-dependent acireductone dioxygenase activity</note>
    </ligand>
</feature>
<feature type="binding site" evidence="1">
    <location>
        <position position="77"/>
    </location>
    <ligand>
        <name>Fe(2+)</name>
        <dbReference type="ChEBI" id="CHEBI:29033"/>
        <note>for iron-dependent acireductone dioxygenase activity</note>
    </ligand>
</feature>
<feature type="binding site" evidence="1">
    <location>
        <position position="77"/>
    </location>
    <ligand>
        <name>Ni(2+)</name>
        <dbReference type="ChEBI" id="CHEBI:49786"/>
        <note>for nickel-dependent acireductone dioxygenase activity</note>
    </ligand>
</feature>
<feature type="binding site" evidence="1">
    <location>
        <position position="116"/>
    </location>
    <ligand>
        <name>Fe(2+)</name>
        <dbReference type="ChEBI" id="CHEBI:29033"/>
        <note>for iron-dependent acireductone dioxygenase activity</note>
    </ligand>
</feature>
<feature type="binding site" evidence="1">
    <location>
        <position position="116"/>
    </location>
    <ligand>
        <name>Ni(2+)</name>
        <dbReference type="ChEBI" id="CHEBI:49786"/>
        <note>for nickel-dependent acireductone dioxygenase activity</note>
    </ligand>
</feature>
<accession>D3BH90</accession>
<gene>
    <name evidence="1" type="primary">ADI1</name>
    <name type="ORF">PPL_07892</name>
</gene>
<reference key="1">
    <citation type="journal article" date="2011" name="Genome Res.">
        <title>Phylogeny-wide analysis of social amoeba genomes highlights ancient origins for complex intercellular communication.</title>
        <authorList>
            <person name="Heidel A.J."/>
            <person name="Lawal H.M."/>
            <person name="Felder M."/>
            <person name="Schilde C."/>
            <person name="Helps N.R."/>
            <person name="Tunggal B."/>
            <person name="Rivero F."/>
            <person name="John U."/>
            <person name="Schleicher M."/>
            <person name="Eichinger L."/>
            <person name="Platzer M."/>
            <person name="Noegel A.A."/>
            <person name="Schaap P."/>
            <person name="Gloeckner G."/>
        </authorList>
    </citation>
    <scope>NUCLEOTIDE SEQUENCE [LARGE SCALE GENOMIC DNA]</scope>
    <source>
        <strain>ATCC 26659 / Pp 5 / PN500</strain>
    </source>
</reference>
<proteinExistence type="inferred from homology"/>
<comment type="function">
    <text evidence="1">Catalyzes 2 different reactions between oxygen and the acireductone 1,2-dihydroxy-3-keto-5-methylthiopentene (DHK-MTPene) depending upon the metal bound in the active site. Fe-containing acireductone dioxygenase (Fe-ARD) produces formate and 2-keto-4-methylthiobutyrate (KMTB), the alpha-ketoacid precursor of methionine in the methionine recycle pathway. Ni-containing acireductone dioxygenase (Ni-ARD) produces methylthiopropionate, carbon monoxide and formate, and does not lie on the methionine recycle pathway.</text>
</comment>
<comment type="catalytic activity">
    <reaction evidence="1">
        <text>1,2-dihydroxy-5-(methylsulfanyl)pent-1-en-3-one + O2 = 4-methylsulfanyl-2-oxobutanoate + formate + 2 H(+)</text>
        <dbReference type="Rhea" id="RHEA:24504"/>
        <dbReference type="ChEBI" id="CHEBI:15378"/>
        <dbReference type="ChEBI" id="CHEBI:15379"/>
        <dbReference type="ChEBI" id="CHEBI:15740"/>
        <dbReference type="ChEBI" id="CHEBI:16723"/>
        <dbReference type="ChEBI" id="CHEBI:49252"/>
        <dbReference type="EC" id="1.13.11.54"/>
    </reaction>
</comment>
<comment type="catalytic activity">
    <reaction evidence="1">
        <text>1,2-dihydroxy-5-(methylsulfanyl)pent-1-en-3-one + O2 = 3-(methylsulfanyl)propanoate + CO + formate + 2 H(+)</text>
        <dbReference type="Rhea" id="RHEA:14161"/>
        <dbReference type="ChEBI" id="CHEBI:15378"/>
        <dbReference type="ChEBI" id="CHEBI:15379"/>
        <dbReference type="ChEBI" id="CHEBI:15740"/>
        <dbReference type="ChEBI" id="CHEBI:17245"/>
        <dbReference type="ChEBI" id="CHEBI:49016"/>
        <dbReference type="ChEBI" id="CHEBI:49252"/>
        <dbReference type="EC" id="1.13.11.53"/>
    </reaction>
</comment>
<comment type="cofactor">
    <cofactor evidence="1">
        <name>Fe(2+)</name>
        <dbReference type="ChEBI" id="CHEBI:29033"/>
    </cofactor>
    <cofactor evidence="1">
        <name>Ni(2+)</name>
        <dbReference type="ChEBI" id="CHEBI:49786"/>
    </cofactor>
    <text evidence="1">Binds either 1 Fe or Ni cation per monomer. Iron-binding promotes an acireductone dioxygenase reaction producing 2-keto-4-methylthiobutyrate, while nickel-binding promotes an acireductone dioxygenase reaction producing 3-(methylsulfanyl)propanoate.</text>
</comment>
<comment type="pathway">
    <text evidence="1">Amino-acid biosynthesis; L-methionine biosynthesis via salvage pathway; L-methionine from S-methyl-5-thio-alpha-D-ribose 1-phosphate: step 5/6.</text>
</comment>
<comment type="subcellular location">
    <subcellularLocation>
        <location evidence="1">Cytoplasm</location>
    </subcellularLocation>
    <subcellularLocation>
        <location evidence="1">Nucleus</location>
    </subcellularLocation>
</comment>
<comment type="similarity">
    <text evidence="1">Belongs to the acireductone dioxygenase (ARD) family.</text>
</comment>
<protein>
    <recommendedName>
        <fullName evidence="1">Acireductone dioxygenase</fullName>
    </recommendedName>
    <alternativeName>
        <fullName evidence="1">Acireductone dioxygenase (Fe(2+)-requiring)</fullName>
        <shortName evidence="1">ARD'</shortName>
        <shortName evidence="1">Fe-ARD</shortName>
        <ecNumber evidence="1">1.13.11.54</ecNumber>
    </alternativeName>
    <alternativeName>
        <fullName evidence="1">Acireductone dioxygenase (Ni(2+)-requiring)</fullName>
        <shortName evidence="1">ARD</shortName>
        <shortName evidence="1">Ni-ARD</shortName>
        <ecNumber evidence="1">1.13.11.53</ecNumber>
    </alternativeName>
</protein>
<keyword id="KW-0028">Amino-acid biosynthesis</keyword>
<keyword id="KW-0963">Cytoplasm</keyword>
<keyword id="KW-0223">Dioxygenase</keyword>
<keyword id="KW-0408">Iron</keyword>
<keyword id="KW-0479">Metal-binding</keyword>
<keyword id="KW-0486">Methionine biosynthesis</keyword>
<keyword id="KW-0533">Nickel</keyword>
<keyword id="KW-0539">Nucleus</keyword>
<keyword id="KW-0560">Oxidoreductase</keyword>
<keyword id="KW-1185">Reference proteome</keyword>
<name>MTND_HETP5</name>
<evidence type="ECO:0000255" key="1">
    <source>
        <dbReference type="HAMAP-Rule" id="MF_03154"/>
    </source>
</evidence>
<organism>
    <name type="scientific">Heterostelium pallidum (strain ATCC 26659 / Pp 5 / PN500)</name>
    <name type="common">Cellular slime mold</name>
    <name type="synonym">Polysphondylium pallidum</name>
    <dbReference type="NCBI Taxonomy" id="670386"/>
    <lineage>
        <taxon>Eukaryota</taxon>
        <taxon>Amoebozoa</taxon>
        <taxon>Evosea</taxon>
        <taxon>Eumycetozoa</taxon>
        <taxon>Dictyostelia</taxon>
        <taxon>Acytosteliales</taxon>
        <taxon>Acytosteliaceae</taxon>
        <taxon>Heterostelium</taxon>
    </lineage>
</organism>